<feature type="chain" id="PRO_0000062275" description="Large ribosomal subunit protein uL16c">
    <location>
        <begin position="1"/>
        <end position="134"/>
    </location>
</feature>
<feature type="region of interest" description="Disordered" evidence="2">
    <location>
        <begin position="1"/>
        <end position="21"/>
    </location>
</feature>
<name>RK16_CHLVU</name>
<organism>
    <name type="scientific">Chlorella vulgaris</name>
    <name type="common">Green alga</name>
    <dbReference type="NCBI Taxonomy" id="3077"/>
    <lineage>
        <taxon>Eukaryota</taxon>
        <taxon>Viridiplantae</taxon>
        <taxon>Chlorophyta</taxon>
        <taxon>core chlorophytes</taxon>
        <taxon>Trebouxiophyceae</taxon>
        <taxon>Chlorellales</taxon>
        <taxon>Chlorellaceae</taxon>
        <taxon>Chlorella clade</taxon>
        <taxon>Chlorella</taxon>
    </lineage>
</organism>
<keyword id="KW-0150">Chloroplast</keyword>
<keyword id="KW-0934">Plastid</keyword>
<keyword id="KW-0687">Ribonucleoprotein</keyword>
<keyword id="KW-0689">Ribosomal protein</keyword>
<reference key="1">
    <citation type="journal article" date="1997" name="Proc. Natl. Acad. Sci. U.S.A.">
        <title>Complete nucleotide sequence of the chloroplast genome from the green alga Chlorella vulgaris: the existence of genes possibly involved in chloroplast division.</title>
        <authorList>
            <person name="Wakasugi T."/>
            <person name="Nagai T."/>
            <person name="Kapoor M."/>
            <person name="Sugita M."/>
            <person name="Ito M."/>
            <person name="Ito S."/>
            <person name="Tsudzuki J."/>
            <person name="Nakashima K."/>
            <person name="Tsudzuki T."/>
            <person name="Suzuki Y."/>
            <person name="Hamada A."/>
            <person name="Ohta T."/>
            <person name="Inamura A."/>
            <person name="Yoshinaga K."/>
            <person name="Sugiura M."/>
        </authorList>
    </citation>
    <scope>NUCLEOTIDE SEQUENCE [LARGE SCALE GENOMIC DNA]</scope>
    <source>
        <strain>IAM C-27 / Tamiya</strain>
    </source>
</reference>
<geneLocation type="chloroplast"/>
<gene>
    <name evidence="1" type="primary">rpl16</name>
</gene>
<sequence length="134" mass="15138">MLSPKRTKYRKHHRGRMRGKASRGNTVVFGDYALQSLEASWITSRQIEAARRAMTRQVRRGGQIWIRLFPDKPVTMRPAETRMGSGKGAPEFWVAVVRPGKVLYELKGVPESVARVALRLAASKLPVKTQILVK</sequence>
<evidence type="ECO:0000255" key="1">
    <source>
        <dbReference type="HAMAP-Rule" id="MF_01342"/>
    </source>
</evidence>
<evidence type="ECO:0000256" key="2">
    <source>
        <dbReference type="SAM" id="MobiDB-lite"/>
    </source>
</evidence>
<evidence type="ECO:0000305" key="3"/>
<accession>P56364</accession>
<comment type="subunit">
    <text evidence="1">Part of the 50S ribosomal subunit.</text>
</comment>
<comment type="subcellular location">
    <subcellularLocation>
        <location>Plastid</location>
        <location>Chloroplast</location>
    </subcellularLocation>
</comment>
<comment type="similarity">
    <text evidence="1">Belongs to the universal ribosomal protein uL16 family.</text>
</comment>
<protein>
    <recommendedName>
        <fullName evidence="1">Large ribosomal subunit protein uL16c</fullName>
    </recommendedName>
    <alternativeName>
        <fullName evidence="3">50S ribosomal protein L16, chloroplastic</fullName>
    </alternativeName>
</protein>
<dbReference type="EMBL" id="AB001684">
    <property type="protein sequence ID" value="BAA58005.1"/>
    <property type="molecule type" value="Genomic_DNA"/>
</dbReference>
<dbReference type="PIR" id="T07357">
    <property type="entry name" value="T07357"/>
</dbReference>
<dbReference type="RefSeq" id="NP_045929.1">
    <property type="nucleotide sequence ID" value="NC_001865.1"/>
</dbReference>
<dbReference type="SMR" id="P56364"/>
<dbReference type="GeneID" id="809131"/>
<dbReference type="OrthoDB" id="34872at2759"/>
<dbReference type="GO" id="GO:0009507">
    <property type="term" value="C:chloroplast"/>
    <property type="evidence" value="ECO:0007669"/>
    <property type="project" value="UniProtKB-SubCell"/>
</dbReference>
<dbReference type="GO" id="GO:0005762">
    <property type="term" value="C:mitochondrial large ribosomal subunit"/>
    <property type="evidence" value="ECO:0007669"/>
    <property type="project" value="TreeGrafter"/>
</dbReference>
<dbReference type="GO" id="GO:0019843">
    <property type="term" value="F:rRNA binding"/>
    <property type="evidence" value="ECO:0007669"/>
    <property type="project" value="InterPro"/>
</dbReference>
<dbReference type="GO" id="GO:0003735">
    <property type="term" value="F:structural constituent of ribosome"/>
    <property type="evidence" value="ECO:0007669"/>
    <property type="project" value="InterPro"/>
</dbReference>
<dbReference type="GO" id="GO:0032543">
    <property type="term" value="P:mitochondrial translation"/>
    <property type="evidence" value="ECO:0007669"/>
    <property type="project" value="TreeGrafter"/>
</dbReference>
<dbReference type="CDD" id="cd01433">
    <property type="entry name" value="Ribosomal_L16_L10e"/>
    <property type="match status" value="1"/>
</dbReference>
<dbReference type="FunFam" id="3.90.1170.10:FF:000001">
    <property type="entry name" value="50S ribosomal protein L16"/>
    <property type="match status" value="1"/>
</dbReference>
<dbReference type="Gene3D" id="3.90.1170.10">
    <property type="entry name" value="Ribosomal protein L10e/L16"/>
    <property type="match status" value="1"/>
</dbReference>
<dbReference type="HAMAP" id="MF_01342">
    <property type="entry name" value="Ribosomal_uL16"/>
    <property type="match status" value="1"/>
</dbReference>
<dbReference type="InterPro" id="IPR047873">
    <property type="entry name" value="Ribosomal_uL16"/>
</dbReference>
<dbReference type="InterPro" id="IPR000114">
    <property type="entry name" value="Ribosomal_uL16_bact-type"/>
</dbReference>
<dbReference type="InterPro" id="IPR020798">
    <property type="entry name" value="Ribosomal_uL16_CS"/>
</dbReference>
<dbReference type="InterPro" id="IPR016180">
    <property type="entry name" value="Ribosomal_uL16_dom"/>
</dbReference>
<dbReference type="InterPro" id="IPR036920">
    <property type="entry name" value="Ribosomal_uL16_sf"/>
</dbReference>
<dbReference type="NCBIfam" id="TIGR01164">
    <property type="entry name" value="rplP_bact"/>
    <property type="match status" value="1"/>
</dbReference>
<dbReference type="PANTHER" id="PTHR12220">
    <property type="entry name" value="50S/60S RIBOSOMAL PROTEIN L16"/>
    <property type="match status" value="1"/>
</dbReference>
<dbReference type="PANTHER" id="PTHR12220:SF13">
    <property type="entry name" value="LARGE RIBOSOMAL SUBUNIT PROTEIN UL16M"/>
    <property type="match status" value="1"/>
</dbReference>
<dbReference type="Pfam" id="PF00252">
    <property type="entry name" value="Ribosomal_L16"/>
    <property type="match status" value="1"/>
</dbReference>
<dbReference type="PRINTS" id="PR00060">
    <property type="entry name" value="RIBOSOMALL16"/>
</dbReference>
<dbReference type="SUPFAM" id="SSF54686">
    <property type="entry name" value="Ribosomal protein L16p/L10e"/>
    <property type="match status" value="1"/>
</dbReference>
<dbReference type="PROSITE" id="PS00586">
    <property type="entry name" value="RIBOSOMAL_L16_1"/>
    <property type="match status" value="1"/>
</dbReference>
<dbReference type="PROSITE" id="PS00701">
    <property type="entry name" value="RIBOSOMAL_L16_2"/>
    <property type="match status" value="1"/>
</dbReference>
<proteinExistence type="inferred from homology"/>